<protein>
    <recommendedName>
        <fullName evidence="1">Threonine--tRNA ligase</fullName>
        <ecNumber evidence="1">6.1.1.3</ecNumber>
    </recommendedName>
    <alternativeName>
        <fullName evidence="1">Threonyl-tRNA synthetase</fullName>
        <shortName evidence="1">ThrRS</shortName>
    </alternativeName>
</protein>
<gene>
    <name evidence="1" type="primary">thrS</name>
    <name type="ordered locus">PA2744</name>
</gene>
<evidence type="ECO:0000255" key="1">
    <source>
        <dbReference type="HAMAP-Rule" id="MF_00184"/>
    </source>
</evidence>
<evidence type="ECO:0000255" key="2">
    <source>
        <dbReference type="PROSITE-ProRule" id="PRU01228"/>
    </source>
</evidence>
<name>SYT_PSEAE</name>
<organism>
    <name type="scientific">Pseudomonas aeruginosa (strain ATCC 15692 / DSM 22644 / CIP 104116 / JCM 14847 / LMG 12228 / 1C / PRS 101 / PAO1)</name>
    <dbReference type="NCBI Taxonomy" id="208964"/>
    <lineage>
        <taxon>Bacteria</taxon>
        <taxon>Pseudomonadati</taxon>
        <taxon>Pseudomonadota</taxon>
        <taxon>Gammaproteobacteria</taxon>
        <taxon>Pseudomonadales</taxon>
        <taxon>Pseudomonadaceae</taxon>
        <taxon>Pseudomonas</taxon>
    </lineage>
</organism>
<keyword id="KW-0030">Aminoacyl-tRNA synthetase</keyword>
<keyword id="KW-0067">ATP-binding</keyword>
<keyword id="KW-0963">Cytoplasm</keyword>
<keyword id="KW-0436">Ligase</keyword>
<keyword id="KW-0479">Metal-binding</keyword>
<keyword id="KW-0547">Nucleotide-binding</keyword>
<keyword id="KW-0648">Protein biosynthesis</keyword>
<keyword id="KW-1185">Reference proteome</keyword>
<keyword id="KW-0694">RNA-binding</keyword>
<keyword id="KW-0820">tRNA-binding</keyword>
<keyword id="KW-0862">Zinc</keyword>
<comment type="function">
    <text evidence="1">Catalyzes the attachment of threonine to tRNA(Thr) in a two-step reaction: L-threonine is first activated by ATP to form Thr-AMP and then transferred to the acceptor end of tRNA(Thr). Also edits incorrectly charged L-seryl-tRNA(Thr).</text>
</comment>
<comment type="catalytic activity">
    <reaction evidence="1">
        <text>tRNA(Thr) + L-threonine + ATP = L-threonyl-tRNA(Thr) + AMP + diphosphate + H(+)</text>
        <dbReference type="Rhea" id="RHEA:24624"/>
        <dbReference type="Rhea" id="RHEA-COMP:9670"/>
        <dbReference type="Rhea" id="RHEA-COMP:9704"/>
        <dbReference type="ChEBI" id="CHEBI:15378"/>
        <dbReference type="ChEBI" id="CHEBI:30616"/>
        <dbReference type="ChEBI" id="CHEBI:33019"/>
        <dbReference type="ChEBI" id="CHEBI:57926"/>
        <dbReference type="ChEBI" id="CHEBI:78442"/>
        <dbReference type="ChEBI" id="CHEBI:78534"/>
        <dbReference type="ChEBI" id="CHEBI:456215"/>
        <dbReference type="EC" id="6.1.1.3"/>
    </reaction>
</comment>
<comment type="cofactor">
    <cofactor evidence="1">
        <name>Zn(2+)</name>
        <dbReference type="ChEBI" id="CHEBI:29105"/>
    </cofactor>
    <text evidence="1">Binds 1 zinc ion per subunit.</text>
</comment>
<comment type="subunit">
    <text evidence="1">Homodimer.</text>
</comment>
<comment type="subcellular location">
    <subcellularLocation>
        <location evidence="1">Cytoplasm</location>
    </subcellularLocation>
</comment>
<comment type="similarity">
    <text evidence="1">Belongs to the class-II aminoacyl-tRNA synthetase family.</text>
</comment>
<feature type="chain" id="PRO_0000101027" description="Threonine--tRNA ligase">
    <location>
        <begin position="1"/>
        <end position="640"/>
    </location>
</feature>
<feature type="domain" description="TGS" evidence="2">
    <location>
        <begin position="1"/>
        <end position="61"/>
    </location>
</feature>
<feature type="region of interest" description="Catalytic" evidence="1">
    <location>
        <begin position="242"/>
        <end position="533"/>
    </location>
</feature>
<feature type="binding site" evidence="1">
    <location>
        <position position="333"/>
    </location>
    <ligand>
        <name>Zn(2+)</name>
        <dbReference type="ChEBI" id="CHEBI:29105"/>
    </ligand>
</feature>
<feature type="binding site" evidence="1">
    <location>
        <position position="384"/>
    </location>
    <ligand>
        <name>Zn(2+)</name>
        <dbReference type="ChEBI" id="CHEBI:29105"/>
    </ligand>
</feature>
<feature type="binding site" evidence="1">
    <location>
        <position position="510"/>
    </location>
    <ligand>
        <name>Zn(2+)</name>
        <dbReference type="ChEBI" id="CHEBI:29105"/>
    </ligand>
</feature>
<proteinExistence type="inferred from homology"/>
<dbReference type="EC" id="6.1.1.3" evidence="1"/>
<dbReference type="EMBL" id="AE004091">
    <property type="protein sequence ID" value="AAG06132.1"/>
    <property type="molecule type" value="Genomic_DNA"/>
</dbReference>
<dbReference type="PIR" id="F83303">
    <property type="entry name" value="F83303"/>
</dbReference>
<dbReference type="RefSeq" id="NP_251434.1">
    <property type="nucleotide sequence ID" value="NC_002516.2"/>
</dbReference>
<dbReference type="RefSeq" id="WP_003090677.1">
    <property type="nucleotide sequence ID" value="NZ_QZGE01000011.1"/>
</dbReference>
<dbReference type="SMR" id="Q9I099"/>
<dbReference type="FunCoup" id="Q9I099">
    <property type="interactions" value="754"/>
</dbReference>
<dbReference type="STRING" id="208964.PA2744"/>
<dbReference type="PaxDb" id="208964-PA2744"/>
<dbReference type="GeneID" id="882972"/>
<dbReference type="KEGG" id="pae:PA2744"/>
<dbReference type="PATRIC" id="fig|208964.12.peg.2869"/>
<dbReference type="PseudoCAP" id="PA2744"/>
<dbReference type="HOGENOM" id="CLU_008554_0_1_6"/>
<dbReference type="InParanoid" id="Q9I099"/>
<dbReference type="OrthoDB" id="9802304at2"/>
<dbReference type="PhylomeDB" id="Q9I099"/>
<dbReference type="BioCyc" id="PAER208964:G1FZ6-2783-MONOMER"/>
<dbReference type="Proteomes" id="UP000002438">
    <property type="component" value="Chromosome"/>
</dbReference>
<dbReference type="GO" id="GO:0005829">
    <property type="term" value="C:cytosol"/>
    <property type="evidence" value="ECO:0000318"/>
    <property type="project" value="GO_Central"/>
</dbReference>
<dbReference type="GO" id="GO:0005524">
    <property type="term" value="F:ATP binding"/>
    <property type="evidence" value="ECO:0007669"/>
    <property type="project" value="UniProtKB-UniRule"/>
</dbReference>
<dbReference type="GO" id="GO:0046872">
    <property type="term" value="F:metal ion binding"/>
    <property type="evidence" value="ECO:0007669"/>
    <property type="project" value="UniProtKB-KW"/>
</dbReference>
<dbReference type="GO" id="GO:0004829">
    <property type="term" value="F:threonine-tRNA ligase activity"/>
    <property type="evidence" value="ECO:0000318"/>
    <property type="project" value="GO_Central"/>
</dbReference>
<dbReference type="GO" id="GO:0000049">
    <property type="term" value="F:tRNA binding"/>
    <property type="evidence" value="ECO:0007669"/>
    <property type="project" value="UniProtKB-KW"/>
</dbReference>
<dbReference type="GO" id="GO:0006435">
    <property type="term" value="P:threonyl-tRNA aminoacylation"/>
    <property type="evidence" value="ECO:0000318"/>
    <property type="project" value="GO_Central"/>
</dbReference>
<dbReference type="CDD" id="cd01667">
    <property type="entry name" value="TGS_ThrRS"/>
    <property type="match status" value="1"/>
</dbReference>
<dbReference type="CDD" id="cd00860">
    <property type="entry name" value="ThrRS_anticodon"/>
    <property type="match status" value="1"/>
</dbReference>
<dbReference type="CDD" id="cd00771">
    <property type="entry name" value="ThrRS_core"/>
    <property type="match status" value="1"/>
</dbReference>
<dbReference type="FunFam" id="3.10.20.30:FF:000005">
    <property type="entry name" value="Threonine--tRNA ligase"/>
    <property type="match status" value="1"/>
</dbReference>
<dbReference type="FunFam" id="3.30.54.20:FF:000002">
    <property type="entry name" value="Threonine--tRNA ligase"/>
    <property type="match status" value="1"/>
</dbReference>
<dbReference type="FunFam" id="3.30.930.10:FF:000002">
    <property type="entry name" value="Threonine--tRNA ligase"/>
    <property type="match status" value="1"/>
</dbReference>
<dbReference type="FunFam" id="3.40.50.800:FF:000001">
    <property type="entry name" value="Threonine--tRNA ligase"/>
    <property type="match status" value="1"/>
</dbReference>
<dbReference type="FunFam" id="3.30.980.10:FF:000005">
    <property type="entry name" value="Threonyl-tRNA synthetase, mitochondrial"/>
    <property type="match status" value="1"/>
</dbReference>
<dbReference type="Gene3D" id="3.10.20.30">
    <property type="match status" value="1"/>
</dbReference>
<dbReference type="Gene3D" id="3.30.54.20">
    <property type="match status" value="1"/>
</dbReference>
<dbReference type="Gene3D" id="3.40.50.800">
    <property type="entry name" value="Anticodon-binding domain"/>
    <property type="match status" value="1"/>
</dbReference>
<dbReference type="Gene3D" id="3.30.930.10">
    <property type="entry name" value="Bira Bifunctional Protein, Domain 2"/>
    <property type="match status" value="1"/>
</dbReference>
<dbReference type="Gene3D" id="3.30.980.10">
    <property type="entry name" value="Threonyl-trna Synthetase, Chain A, domain 2"/>
    <property type="match status" value="1"/>
</dbReference>
<dbReference type="HAMAP" id="MF_00184">
    <property type="entry name" value="Thr_tRNA_synth"/>
    <property type="match status" value="1"/>
</dbReference>
<dbReference type="InterPro" id="IPR002314">
    <property type="entry name" value="aa-tRNA-synt_IIb"/>
</dbReference>
<dbReference type="InterPro" id="IPR006195">
    <property type="entry name" value="aa-tRNA-synth_II"/>
</dbReference>
<dbReference type="InterPro" id="IPR045864">
    <property type="entry name" value="aa-tRNA-synth_II/BPL/LPL"/>
</dbReference>
<dbReference type="InterPro" id="IPR004154">
    <property type="entry name" value="Anticodon-bd"/>
</dbReference>
<dbReference type="InterPro" id="IPR036621">
    <property type="entry name" value="Anticodon-bd_dom_sf"/>
</dbReference>
<dbReference type="InterPro" id="IPR012675">
    <property type="entry name" value="Beta-grasp_dom_sf"/>
</dbReference>
<dbReference type="InterPro" id="IPR004095">
    <property type="entry name" value="TGS"/>
</dbReference>
<dbReference type="InterPro" id="IPR012676">
    <property type="entry name" value="TGS-like"/>
</dbReference>
<dbReference type="InterPro" id="IPR002320">
    <property type="entry name" value="Thr-tRNA-ligase_IIa"/>
</dbReference>
<dbReference type="InterPro" id="IPR018163">
    <property type="entry name" value="Thr/Ala-tRNA-synth_IIc_edit"/>
</dbReference>
<dbReference type="InterPro" id="IPR047246">
    <property type="entry name" value="ThrRS_anticodon"/>
</dbReference>
<dbReference type="InterPro" id="IPR033728">
    <property type="entry name" value="ThrRS_core"/>
</dbReference>
<dbReference type="InterPro" id="IPR012947">
    <property type="entry name" value="tRNA_SAD"/>
</dbReference>
<dbReference type="NCBIfam" id="TIGR00418">
    <property type="entry name" value="thrS"/>
    <property type="match status" value="1"/>
</dbReference>
<dbReference type="PANTHER" id="PTHR11451:SF44">
    <property type="entry name" value="THREONINE--TRNA LIGASE, CHLOROPLASTIC_MITOCHONDRIAL 2"/>
    <property type="match status" value="1"/>
</dbReference>
<dbReference type="PANTHER" id="PTHR11451">
    <property type="entry name" value="THREONINE-TRNA LIGASE"/>
    <property type="match status" value="1"/>
</dbReference>
<dbReference type="Pfam" id="PF03129">
    <property type="entry name" value="HGTP_anticodon"/>
    <property type="match status" value="1"/>
</dbReference>
<dbReference type="Pfam" id="PF02824">
    <property type="entry name" value="TGS"/>
    <property type="match status" value="1"/>
</dbReference>
<dbReference type="Pfam" id="PF00587">
    <property type="entry name" value="tRNA-synt_2b"/>
    <property type="match status" value="1"/>
</dbReference>
<dbReference type="Pfam" id="PF07973">
    <property type="entry name" value="tRNA_SAD"/>
    <property type="match status" value="1"/>
</dbReference>
<dbReference type="PRINTS" id="PR01047">
    <property type="entry name" value="TRNASYNTHTHR"/>
</dbReference>
<dbReference type="SMART" id="SM00863">
    <property type="entry name" value="tRNA_SAD"/>
    <property type="match status" value="1"/>
</dbReference>
<dbReference type="SUPFAM" id="SSF52954">
    <property type="entry name" value="Class II aaRS ABD-related"/>
    <property type="match status" value="1"/>
</dbReference>
<dbReference type="SUPFAM" id="SSF55681">
    <property type="entry name" value="Class II aaRS and biotin synthetases"/>
    <property type="match status" value="1"/>
</dbReference>
<dbReference type="SUPFAM" id="SSF81271">
    <property type="entry name" value="TGS-like"/>
    <property type="match status" value="1"/>
</dbReference>
<dbReference type="SUPFAM" id="SSF55186">
    <property type="entry name" value="ThrRS/AlaRS common domain"/>
    <property type="match status" value="1"/>
</dbReference>
<dbReference type="PROSITE" id="PS50862">
    <property type="entry name" value="AA_TRNA_LIGASE_II"/>
    <property type="match status" value="1"/>
</dbReference>
<dbReference type="PROSITE" id="PS51880">
    <property type="entry name" value="TGS"/>
    <property type="match status" value="1"/>
</dbReference>
<reference key="1">
    <citation type="journal article" date="2000" name="Nature">
        <title>Complete genome sequence of Pseudomonas aeruginosa PAO1, an opportunistic pathogen.</title>
        <authorList>
            <person name="Stover C.K."/>
            <person name="Pham X.-Q.T."/>
            <person name="Erwin A.L."/>
            <person name="Mizoguchi S.D."/>
            <person name="Warrener P."/>
            <person name="Hickey M.J."/>
            <person name="Brinkman F.S.L."/>
            <person name="Hufnagle W.O."/>
            <person name="Kowalik D.J."/>
            <person name="Lagrou M."/>
            <person name="Garber R.L."/>
            <person name="Goltry L."/>
            <person name="Tolentino E."/>
            <person name="Westbrock-Wadman S."/>
            <person name="Yuan Y."/>
            <person name="Brody L.L."/>
            <person name="Coulter S.N."/>
            <person name="Folger K.R."/>
            <person name="Kas A."/>
            <person name="Larbig K."/>
            <person name="Lim R.M."/>
            <person name="Smith K.A."/>
            <person name="Spencer D.H."/>
            <person name="Wong G.K.-S."/>
            <person name="Wu Z."/>
            <person name="Paulsen I.T."/>
            <person name="Reizer J."/>
            <person name="Saier M.H. Jr."/>
            <person name="Hancock R.E.W."/>
            <person name="Lory S."/>
            <person name="Olson M.V."/>
        </authorList>
    </citation>
    <scope>NUCLEOTIDE SEQUENCE [LARGE SCALE GENOMIC DNA]</scope>
    <source>
        <strain>ATCC 15692 / DSM 22644 / CIP 104116 / JCM 14847 / LMG 12228 / 1C / PRS 101 / PAO1</strain>
    </source>
</reference>
<accession>Q9I099</accession>
<sequence length="640" mass="73080">MPIITLPDGSQRSFDHPVSVAEVAQSIGAGLAKATLAGKVDGRLVDACDTIDRDATLQIITPKDEEGLEIIRHSCAHLVGHAVKQLYPTAKMVIGPVIEEGFYYDIFFERPFTPEDMAAIQQRMRELIDKDYDVIKKMTPRAEVIELFKSRGEDYKLRLIDDMPDEKAMGLYFHEEYVDMCRGPHVPNTRFLKAFQLTKISGAYWRGDSKNEQLQRIYGTAWADKKQLAAYIQRIEEAEKRDHRRIGKQLDLFHLQEEAPGMVFWHPNGWSVYQVLEQYMRKVQRDHGYVEVRTPQVVDRILWERSGHWSNYAENMFTTSSESRDYAVKPMNCPCHVQIFNQGLKSYRDLPLRLAEFGACHRNEPSGALHGIMRVRGFTQDDAHIFCTEEQVKKEAADFIKLTLQVYRDFGFTDIAMKLSTRPAKRVGSDELWDRAEGALADALNESGLAWEYQPGEGAFYGPKIEFTLKDCLGRNWQCGTLQYDPNLPERLDASYIAEDNNRKRPVMLHRAILGSFERFIGMLIEHYAGAFPAWLAPTQAVVMNITDKQADFAAEVVRILGESGFRAKSDLRNEKIGFKIREHTLLKVPYLLVIGDREVESKAVAVRTREGEDLGSMPVTQFAELLAQAVSRRGRQDSE</sequence>